<reference key="1">
    <citation type="journal article" date="2005" name="Nature">
        <title>The genome of the social amoeba Dictyostelium discoideum.</title>
        <authorList>
            <person name="Eichinger L."/>
            <person name="Pachebat J.A."/>
            <person name="Gloeckner G."/>
            <person name="Rajandream M.A."/>
            <person name="Sucgang R."/>
            <person name="Berriman M."/>
            <person name="Song J."/>
            <person name="Olsen R."/>
            <person name="Szafranski K."/>
            <person name="Xu Q."/>
            <person name="Tunggal B."/>
            <person name="Kummerfeld S."/>
            <person name="Madera M."/>
            <person name="Konfortov B.A."/>
            <person name="Rivero F."/>
            <person name="Bankier A.T."/>
            <person name="Lehmann R."/>
            <person name="Hamlin N."/>
            <person name="Davies R."/>
            <person name="Gaudet P."/>
            <person name="Fey P."/>
            <person name="Pilcher K."/>
            <person name="Chen G."/>
            <person name="Saunders D."/>
            <person name="Sodergren E.J."/>
            <person name="Davis P."/>
            <person name="Kerhornou A."/>
            <person name="Nie X."/>
            <person name="Hall N."/>
            <person name="Anjard C."/>
            <person name="Hemphill L."/>
            <person name="Bason N."/>
            <person name="Farbrother P."/>
            <person name="Desany B."/>
            <person name="Just E."/>
            <person name="Morio T."/>
            <person name="Rost R."/>
            <person name="Churcher C.M."/>
            <person name="Cooper J."/>
            <person name="Haydock S."/>
            <person name="van Driessche N."/>
            <person name="Cronin A."/>
            <person name="Goodhead I."/>
            <person name="Muzny D.M."/>
            <person name="Mourier T."/>
            <person name="Pain A."/>
            <person name="Lu M."/>
            <person name="Harper D."/>
            <person name="Lindsay R."/>
            <person name="Hauser H."/>
            <person name="James K.D."/>
            <person name="Quiles M."/>
            <person name="Madan Babu M."/>
            <person name="Saito T."/>
            <person name="Buchrieser C."/>
            <person name="Wardroper A."/>
            <person name="Felder M."/>
            <person name="Thangavelu M."/>
            <person name="Johnson D."/>
            <person name="Knights A."/>
            <person name="Loulseged H."/>
            <person name="Mungall K.L."/>
            <person name="Oliver K."/>
            <person name="Price C."/>
            <person name="Quail M.A."/>
            <person name="Urushihara H."/>
            <person name="Hernandez J."/>
            <person name="Rabbinowitsch E."/>
            <person name="Steffen D."/>
            <person name="Sanders M."/>
            <person name="Ma J."/>
            <person name="Kohara Y."/>
            <person name="Sharp S."/>
            <person name="Simmonds M.N."/>
            <person name="Spiegler S."/>
            <person name="Tivey A."/>
            <person name="Sugano S."/>
            <person name="White B."/>
            <person name="Walker D."/>
            <person name="Woodward J.R."/>
            <person name="Winckler T."/>
            <person name="Tanaka Y."/>
            <person name="Shaulsky G."/>
            <person name="Schleicher M."/>
            <person name="Weinstock G.M."/>
            <person name="Rosenthal A."/>
            <person name="Cox E.C."/>
            <person name="Chisholm R.L."/>
            <person name="Gibbs R.A."/>
            <person name="Loomis W.F."/>
            <person name="Platzer M."/>
            <person name="Kay R.R."/>
            <person name="Williams J.G."/>
            <person name="Dear P.H."/>
            <person name="Noegel A.A."/>
            <person name="Barrell B.G."/>
            <person name="Kuspa A."/>
        </authorList>
    </citation>
    <scope>NUCLEOTIDE SEQUENCE [LARGE SCALE GENOMIC DNA]</scope>
    <source>
        <strain>AX4</strain>
    </source>
</reference>
<accession>Q55EX5</accession>
<feature type="chain" id="PRO_0000328004" description="Probable U6 snRNA-associated Sm-like protein LSm5">
    <location>
        <begin position="1"/>
        <end position="97"/>
    </location>
</feature>
<feature type="domain" description="Sm" evidence="2">
    <location>
        <begin position="17"/>
        <end position="92"/>
    </location>
</feature>
<comment type="function">
    <text evidence="1">Plays a role in pre-mRNA splicing as component of the U4/U6-U5 tri-snRNP complex that is involved in spliceosome assembly, and as component of the precatalytic spliceosome (spliceosome B complex). The heptameric LSM2-8 complex binds specifically to the 3'-terminal U-tract of U6 snRNA.</text>
</comment>
<comment type="subunit">
    <text evidence="1">Component of the precatalytic spliceosome (spliceosome B complex). Component of the U4/U6-U5 tri-snRNP complex, a building block of the precatalytic spliceosome (spliceosome B complex). LSM2, LSM3, LSM4, LSM5, LSM6, LSM7 and LSM8 form a heptameric, ring-shaped subcomplex (the LSM2-8 complex) that is part of the U4/U6-U5 tri-snRNP complex and the precatalytic spliceosome.</text>
</comment>
<comment type="subcellular location">
    <subcellularLocation>
        <location evidence="1">Nucleus</location>
    </subcellularLocation>
</comment>
<comment type="similarity">
    <text evidence="3">Belongs to the snRNP Sm proteins family.</text>
</comment>
<dbReference type="EMBL" id="AAFI02000004">
    <property type="protein sequence ID" value="EAL72947.1"/>
    <property type="molecule type" value="Genomic_DNA"/>
</dbReference>
<dbReference type="RefSeq" id="XP_646895.1">
    <property type="nucleotide sequence ID" value="XM_641803.1"/>
</dbReference>
<dbReference type="SMR" id="Q55EX5"/>
<dbReference type="FunCoup" id="Q55EX5">
    <property type="interactions" value="466"/>
</dbReference>
<dbReference type="STRING" id="44689.Q55EX5"/>
<dbReference type="PaxDb" id="44689-DDB0233383"/>
<dbReference type="EnsemblProtists" id="EAL72947">
    <property type="protein sequence ID" value="EAL72947"/>
    <property type="gene ID" value="DDB_G0268716"/>
</dbReference>
<dbReference type="GeneID" id="8616580"/>
<dbReference type="KEGG" id="ddi:DDB_G0268716"/>
<dbReference type="dictyBase" id="DDB_G0268716">
    <property type="gene designation" value="lsm5"/>
</dbReference>
<dbReference type="VEuPathDB" id="AmoebaDB:DDB_G0268716"/>
<dbReference type="eggNOG" id="KOG1775">
    <property type="taxonomic scope" value="Eukaryota"/>
</dbReference>
<dbReference type="HOGENOM" id="CLU_076902_6_1_1"/>
<dbReference type="InParanoid" id="Q55EX5"/>
<dbReference type="OMA" id="YETTPQG"/>
<dbReference type="PhylomeDB" id="Q55EX5"/>
<dbReference type="Reactome" id="R-DDI-430039">
    <property type="pathway name" value="mRNA decay by 5' to 3' exoribonuclease"/>
</dbReference>
<dbReference type="PRO" id="PR:Q55EX5"/>
<dbReference type="Proteomes" id="UP000002195">
    <property type="component" value="Chromosome 1"/>
</dbReference>
<dbReference type="GO" id="GO:1990726">
    <property type="term" value="C:Lsm1-7-Pat1 complex"/>
    <property type="evidence" value="ECO:0000318"/>
    <property type="project" value="GO_Central"/>
</dbReference>
<dbReference type="GO" id="GO:0005730">
    <property type="term" value="C:nucleolus"/>
    <property type="evidence" value="ECO:0000250"/>
    <property type="project" value="dictyBase"/>
</dbReference>
<dbReference type="GO" id="GO:0005732">
    <property type="term" value="C:sno(s)RNA-containing ribonucleoprotein complex"/>
    <property type="evidence" value="ECO:0000250"/>
    <property type="project" value="dictyBase"/>
</dbReference>
<dbReference type="GO" id="GO:0005681">
    <property type="term" value="C:spliceosomal complex"/>
    <property type="evidence" value="ECO:0007669"/>
    <property type="project" value="UniProtKB-KW"/>
</dbReference>
<dbReference type="GO" id="GO:0046540">
    <property type="term" value="C:U4/U6 x U5 tri-snRNP complex"/>
    <property type="evidence" value="ECO:0000250"/>
    <property type="project" value="dictyBase"/>
</dbReference>
<dbReference type="GO" id="GO:0005688">
    <property type="term" value="C:U6 snRNP"/>
    <property type="evidence" value="ECO:0000250"/>
    <property type="project" value="dictyBase"/>
</dbReference>
<dbReference type="GO" id="GO:0003723">
    <property type="term" value="F:RNA binding"/>
    <property type="evidence" value="ECO:0000250"/>
    <property type="project" value="dictyBase"/>
</dbReference>
<dbReference type="GO" id="GO:0000398">
    <property type="term" value="P:mRNA splicing, via spliceosome"/>
    <property type="evidence" value="ECO:0000250"/>
    <property type="project" value="dictyBase"/>
</dbReference>
<dbReference type="CDD" id="cd01732">
    <property type="entry name" value="LSm5"/>
    <property type="match status" value="1"/>
</dbReference>
<dbReference type="FunFam" id="2.30.30.100:FF:000147">
    <property type="entry name" value="Probable U6 snRNA-associated Sm-like protein LSm5"/>
    <property type="match status" value="1"/>
</dbReference>
<dbReference type="Gene3D" id="2.30.30.100">
    <property type="match status" value="1"/>
</dbReference>
<dbReference type="InterPro" id="IPR033871">
    <property type="entry name" value="LSm5"/>
</dbReference>
<dbReference type="InterPro" id="IPR010920">
    <property type="entry name" value="LSM_dom_sf"/>
</dbReference>
<dbReference type="InterPro" id="IPR047575">
    <property type="entry name" value="Sm"/>
</dbReference>
<dbReference type="InterPro" id="IPR001163">
    <property type="entry name" value="Sm_dom_euk/arc"/>
</dbReference>
<dbReference type="PANTHER" id="PTHR20971">
    <property type="entry name" value="U6 SNRNA-ASSOCIATED PROTEIN"/>
    <property type="match status" value="1"/>
</dbReference>
<dbReference type="PANTHER" id="PTHR20971:SF0">
    <property type="entry name" value="U6 SNRNA-ASSOCIATED SM-LIKE PROTEIN LSM5"/>
    <property type="match status" value="1"/>
</dbReference>
<dbReference type="Pfam" id="PF01423">
    <property type="entry name" value="LSM"/>
    <property type="match status" value="1"/>
</dbReference>
<dbReference type="SMART" id="SM00651">
    <property type="entry name" value="Sm"/>
    <property type="match status" value="1"/>
</dbReference>
<dbReference type="SUPFAM" id="SSF50182">
    <property type="entry name" value="Sm-like ribonucleoproteins"/>
    <property type="match status" value="1"/>
</dbReference>
<dbReference type="PROSITE" id="PS52002">
    <property type="entry name" value="SM"/>
    <property type="match status" value="1"/>
</dbReference>
<gene>
    <name type="primary">lsm5</name>
    <name type="ORF">DDB_G0268716</name>
</gene>
<sequence>MSEVENSNTVDLQSQLLPLELIEKCIGSRIWIAMKNDKEFVGTLLGFDAYVNIFLKDVTEYEYTPEGLKTVKLDNILLNGNHVCLLVPGGEGPKVKA</sequence>
<protein>
    <recommendedName>
        <fullName>Probable U6 snRNA-associated Sm-like protein LSm5</fullName>
    </recommendedName>
</protein>
<evidence type="ECO:0000250" key="1">
    <source>
        <dbReference type="UniProtKB" id="Q9Y4Y9"/>
    </source>
</evidence>
<evidence type="ECO:0000255" key="2">
    <source>
        <dbReference type="PROSITE-ProRule" id="PRU01346"/>
    </source>
</evidence>
<evidence type="ECO:0000305" key="3"/>
<organism>
    <name type="scientific">Dictyostelium discoideum</name>
    <name type="common">Social amoeba</name>
    <dbReference type="NCBI Taxonomy" id="44689"/>
    <lineage>
        <taxon>Eukaryota</taxon>
        <taxon>Amoebozoa</taxon>
        <taxon>Evosea</taxon>
        <taxon>Eumycetozoa</taxon>
        <taxon>Dictyostelia</taxon>
        <taxon>Dictyosteliales</taxon>
        <taxon>Dictyosteliaceae</taxon>
        <taxon>Dictyostelium</taxon>
    </lineage>
</organism>
<name>LSM5_DICDI</name>
<proteinExistence type="inferred from homology"/>
<keyword id="KW-0507">mRNA processing</keyword>
<keyword id="KW-0508">mRNA splicing</keyword>
<keyword id="KW-0539">Nucleus</keyword>
<keyword id="KW-1185">Reference proteome</keyword>
<keyword id="KW-0687">Ribonucleoprotein</keyword>
<keyword id="KW-0694">RNA-binding</keyword>
<keyword id="KW-0747">Spliceosome</keyword>